<reference key="1">
    <citation type="submission" date="2008-12" db="EMBL/GenBank/DDBJ databases">
        <title>Complete sequence of Chloroflexus aggregans DSM 9485.</title>
        <authorList>
            <consortium name="US DOE Joint Genome Institute"/>
            <person name="Lucas S."/>
            <person name="Copeland A."/>
            <person name="Lapidus A."/>
            <person name="Glavina del Rio T."/>
            <person name="Dalin E."/>
            <person name="Tice H."/>
            <person name="Pitluck S."/>
            <person name="Foster B."/>
            <person name="Larimer F."/>
            <person name="Land M."/>
            <person name="Hauser L."/>
            <person name="Kyrpides N."/>
            <person name="Mikhailova N."/>
            <person name="Bryant D.A."/>
            <person name="Richardson P."/>
        </authorList>
    </citation>
    <scope>NUCLEOTIDE SEQUENCE [LARGE SCALE GENOMIC DNA]</scope>
    <source>
        <strain>MD-66 / DSM 9485</strain>
    </source>
</reference>
<protein>
    <recommendedName>
        <fullName evidence="1">Large ribosomal subunit protein uL18</fullName>
    </recommendedName>
    <alternativeName>
        <fullName evidence="2">50S ribosomal protein L18</fullName>
    </alternativeName>
</protein>
<name>RL18_CHLAD</name>
<evidence type="ECO:0000255" key="1">
    <source>
        <dbReference type="HAMAP-Rule" id="MF_01337"/>
    </source>
</evidence>
<evidence type="ECO:0000305" key="2"/>
<organism>
    <name type="scientific">Chloroflexus aggregans (strain MD-66 / DSM 9485)</name>
    <dbReference type="NCBI Taxonomy" id="326427"/>
    <lineage>
        <taxon>Bacteria</taxon>
        <taxon>Bacillati</taxon>
        <taxon>Chloroflexota</taxon>
        <taxon>Chloroflexia</taxon>
        <taxon>Chloroflexales</taxon>
        <taxon>Chloroflexineae</taxon>
        <taxon>Chloroflexaceae</taxon>
        <taxon>Chloroflexus</taxon>
    </lineage>
</organism>
<accession>B8G6Q9</accession>
<sequence>MGKRTPRELRLRRHNRIRKRVSGTPERPRLNVFRSHAHIYAQVIDDTVGHTLVAASTIEKGWSGSPELTKTQEAALVGKLIAERALQAGITKVVFDRGGYKYHGRVKALAEAAREAGLNF</sequence>
<comment type="function">
    <text evidence="1">This is one of the proteins that bind and probably mediate the attachment of the 5S RNA into the large ribosomal subunit, where it forms part of the central protuberance.</text>
</comment>
<comment type="subunit">
    <text evidence="1">Part of the 50S ribosomal subunit; part of the 5S rRNA/L5/L18/L25 subcomplex. Contacts the 5S and 23S rRNAs.</text>
</comment>
<comment type="similarity">
    <text evidence="1">Belongs to the universal ribosomal protein uL18 family.</text>
</comment>
<proteinExistence type="inferred from homology"/>
<dbReference type="EMBL" id="CP001337">
    <property type="protein sequence ID" value="ACL25868.1"/>
    <property type="molecule type" value="Genomic_DNA"/>
</dbReference>
<dbReference type="RefSeq" id="WP_015941722.1">
    <property type="nucleotide sequence ID" value="NC_011831.1"/>
</dbReference>
<dbReference type="SMR" id="B8G6Q9"/>
<dbReference type="STRING" id="326427.Cagg_3008"/>
<dbReference type="KEGG" id="cag:Cagg_3008"/>
<dbReference type="eggNOG" id="COG0256">
    <property type="taxonomic scope" value="Bacteria"/>
</dbReference>
<dbReference type="HOGENOM" id="CLU_098841_0_1_0"/>
<dbReference type="OrthoDB" id="9810939at2"/>
<dbReference type="Proteomes" id="UP000002508">
    <property type="component" value="Chromosome"/>
</dbReference>
<dbReference type="GO" id="GO:0022625">
    <property type="term" value="C:cytosolic large ribosomal subunit"/>
    <property type="evidence" value="ECO:0007669"/>
    <property type="project" value="TreeGrafter"/>
</dbReference>
<dbReference type="GO" id="GO:0008097">
    <property type="term" value="F:5S rRNA binding"/>
    <property type="evidence" value="ECO:0007669"/>
    <property type="project" value="TreeGrafter"/>
</dbReference>
<dbReference type="GO" id="GO:0003735">
    <property type="term" value="F:structural constituent of ribosome"/>
    <property type="evidence" value="ECO:0007669"/>
    <property type="project" value="InterPro"/>
</dbReference>
<dbReference type="GO" id="GO:0006412">
    <property type="term" value="P:translation"/>
    <property type="evidence" value="ECO:0007669"/>
    <property type="project" value="UniProtKB-UniRule"/>
</dbReference>
<dbReference type="CDD" id="cd00432">
    <property type="entry name" value="Ribosomal_L18_L5e"/>
    <property type="match status" value="1"/>
</dbReference>
<dbReference type="FunFam" id="3.30.420.100:FF:000001">
    <property type="entry name" value="50S ribosomal protein L18"/>
    <property type="match status" value="1"/>
</dbReference>
<dbReference type="Gene3D" id="3.30.420.100">
    <property type="match status" value="1"/>
</dbReference>
<dbReference type="HAMAP" id="MF_01337_B">
    <property type="entry name" value="Ribosomal_uL18_B"/>
    <property type="match status" value="1"/>
</dbReference>
<dbReference type="InterPro" id="IPR004389">
    <property type="entry name" value="Ribosomal_uL18_bac-type"/>
</dbReference>
<dbReference type="InterPro" id="IPR005484">
    <property type="entry name" value="Ribosomal_uL18_bac/euk"/>
</dbReference>
<dbReference type="NCBIfam" id="TIGR00060">
    <property type="entry name" value="L18_bact"/>
    <property type="match status" value="1"/>
</dbReference>
<dbReference type="PANTHER" id="PTHR12899">
    <property type="entry name" value="39S RIBOSOMAL PROTEIN L18, MITOCHONDRIAL"/>
    <property type="match status" value="1"/>
</dbReference>
<dbReference type="PANTHER" id="PTHR12899:SF3">
    <property type="entry name" value="LARGE RIBOSOMAL SUBUNIT PROTEIN UL18M"/>
    <property type="match status" value="1"/>
</dbReference>
<dbReference type="Pfam" id="PF00861">
    <property type="entry name" value="Ribosomal_L18p"/>
    <property type="match status" value="1"/>
</dbReference>
<dbReference type="SUPFAM" id="SSF53137">
    <property type="entry name" value="Translational machinery components"/>
    <property type="match status" value="1"/>
</dbReference>
<feature type="chain" id="PRO_1000166217" description="Large ribosomal subunit protein uL18">
    <location>
        <begin position="1"/>
        <end position="120"/>
    </location>
</feature>
<gene>
    <name evidence="1" type="primary">rplR</name>
    <name type="ordered locus">Cagg_3008</name>
</gene>
<keyword id="KW-0687">Ribonucleoprotein</keyword>
<keyword id="KW-0689">Ribosomal protein</keyword>
<keyword id="KW-0694">RNA-binding</keyword>
<keyword id="KW-0699">rRNA-binding</keyword>